<organism>
    <name type="scientific">Salmonella dublin (strain CT_02021853)</name>
    <dbReference type="NCBI Taxonomy" id="439851"/>
    <lineage>
        <taxon>Bacteria</taxon>
        <taxon>Pseudomonadati</taxon>
        <taxon>Pseudomonadota</taxon>
        <taxon>Gammaproteobacteria</taxon>
        <taxon>Enterobacterales</taxon>
        <taxon>Enterobacteriaceae</taxon>
        <taxon>Salmonella</taxon>
    </lineage>
</organism>
<gene>
    <name evidence="1" type="primary">rpsQ</name>
    <name type="ordered locus">SeD_A3798</name>
</gene>
<keyword id="KW-0687">Ribonucleoprotein</keyword>
<keyword id="KW-0689">Ribosomal protein</keyword>
<keyword id="KW-0694">RNA-binding</keyword>
<keyword id="KW-0699">rRNA-binding</keyword>
<feature type="chain" id="PRO_1000143295" description="Small ribosomal subunit protein uS17">
    <location>
        <begin position="1"/>
        <end position="84"/>
    </location>
</feature>
<protein>
    <recommendedName>
        <fullName evidence="1">Small ribosomal subunit protein uS17</fullName>
    </recommendedName>
    <alternativeName>
        <fullName evidence="2">30S ribosomal protein S17</fullName>
    </alternativeName>
</protein>
<name>RS17_SALDC</name>
<accession>B5FJK5</accession>
<reference key="1">
    <citation type="journal article" date="2011" name="J. Bacteriol.">
        <title>Comparative genomics of 28 Salmonella enterica isolates: evidence for CRISPR-mediated adaptive sublineage evolution.</title>
        <authorList>
            <person name="Fricke W.F."/>
            <person name="Mammel M.K."/>
            <person name="McDermott P.F."/>
            <person name="Tartera C."/>
            <person name="White D.G."/>
            <person name="Leclerc J.E."/>
            <person name="Ravel J."/>
            <person name="Cebula T.A."/>
        </authorList>
    </citation>
    <scope>NUCLEOTIDE SEQUENCE [LARGE SCALE GENOMIC DNA]</scope>
    <source>
        <strain>CT_02021853</strain>
    </source>
</reference>
<dbReference type="EMBL" id="CP001144">
    <property type="protein sequence ID" value="ACH74532.1"/>
    <property type="molecule type" value="Genomic_DNA"/>
</dbReference>
<dbReference type="RefSeq" id="WP_000130101.1">
    <property type="nucleotide sequence ID" value="NC_011205.1"/>
</dbReference>
<dbReference type="SMR" id="B5FJK5"/>
<dbReference type="GeneID" id="66757766"/>
<dbReference type="KEGG" id="sed:SeD_A3798"/>
<dbReference type="HOGENOM" id="CLU_073626_1_1_6"/>
<dbReference type="Proteomes" id="UP000008322">
    <property type="component" value="Chromosome"/>
</dbReference>
<dbReference type="GO" id="GO:0022627">
    <property type="term" value="C:cytosolic small ribosomal subunit"/>
    <property type="evidence" value="ECO:0007669"/>
    <property type="project" value="TreeGrafter"/>
</dbReference>
<dbReference type="GO" id="GO:0019843">
    <property type="term" value="F:rRNA binding"/>
    <property type="evidence" value="ECO:0007669"/>
    <property type="project" value="UniProtKB-UniRule"/>
</dbReference>
<dbReference type="GO" id="GO:0003735">
    <property type="term" value="F:structural constituent of ribosome"/>
    <property type="evidence" value="ECO:0007669"/>
    <property type="project" value="InterPro"/>
</dbReference>
<dbReference type="GO" id="GO:0006412">
    <property type="term" value="P:translation"/>
    <property type="evidence" value="ECO:0007669"/>
    <property type="project" value="UniProtKB-UniRule"/>
</dbReference>
<dbReference type="CDD" id="cd00364">
    <property type="entry name" value="Ribosomal_uS17"/>
    <property type="match status" value="1"/>
</dbReference>
<dbReference type="FunFam" id="2.40.50.140:FF:000014">
    <property type="entry name" value="30S ribosomal protein S17"/>
    <property type="match status" value="1"/>
</dbReference>
<dbReference type="Gene3D" id="2.40.50.140">
    <property type="entry name" value="Nucleic acid-binding proteins"/>
    <property type="match status" value="1"/>
</dbReference>
<dbReference type="HAMAP" id="MF_01345_B">
    <property type="entry name" value="Ribosomal_uS17_B"/>
    <property type="match status" value="1"/>
</dbReference>
<dbReference type="InterPro" id="IPR012340">
    <property type="entry name" value="NA-bd_OB-fold"/>
</dbReference>
<dbReference type="InterPro" id="IPR000266">
    <property type="entry name" value="Ribosomal_uS17"/>
</dbReference>
<dbReference type="InterPro" id="IPR019984">
    <property type="entry name" value="Ribosomal_uS17_bact/chlr"/>
</dbReference>
<dbReference type="InterPro" id="IPR019979">
    <property type="entry name" value="Ribosomal_uS17_CS"/>
</dbReference>
<dbReference type="NCBIfam" id="NF004123">
    <property type="entry name" value="PRK05610.1"/>
    <property type="match status" value="1"/>
</dbReference>
<dbReference type="NCBIfam" id="TIGR03635">
    <property type="entry name" value="uS17_bact"/>
    <property type="match status" value="1"/>
</dbReference>
<dbReference type="PANTHER" id="PTHR10744">
    <property type="entry name" value="40S RIBOSOMAL PROTEIN S11 FAMILY MEMBER"/>
    <property type="match status" value="1"/>
</dbReference>
<dbReference type="PANTHER" id="PTHR10744:SF1">
    <property type="entry name" value="SMALL RIBOSOMAL SUBUNIT PROTEIN US17M"/>
    <property type="match status" value="1"/>
</dbReference>
<dbReference type="Pfam" id="PF00366">
    <property type="entry name" value="Ribosomal_S17"/>
    <property type="match status" value="1"/>
</dbReference>
<dbReference type="PRINTS" id="PR00973">
    <property type="entry name" value="RIBOSOMALS17"/>
</dbReference>
<dbReference type="SUPFAM" id="SSF50249">
    <property type="entry name" value="Nucleic acid-binding proteins"/>
    <property type="match status" value="1"/>
</dbReference>
<dbReference type="PROSITE" id="PS00056">
    <property type="entry name" value="RIBOSOMAL_S17"/>
    <property type="match status" value="1"/>
</dbReference>
<sequence length="84" mass="9722">MTDKIRTLQGRVVSDKMEKSIVVAIERFVKHPIYGKFIKRTTKMHVHDENNECGIGDVVEIRECRPLSKTKSWTLVRVVEKAVL</sequence>
<proteinExistence type="inferred from homology"/>
<evidence type="ECO:0000255" key="1">
    <source>
        <dbReference type="HAMAP-Rule" id="MF_01345"/>
    </source>
</evidence>
<evidence type="ECO:0000305" key="2"/>
<comment type="function">
    <text evidence="1">One of the primary rRNA binding proteins, it binds specifically to the 5'-end of 16S ribosomal RNA.</text>
</comment>
<comment type="subunit">
    <text evidence="1">Part of the 30S ribosomal subunit.</text>
</comment>
<comment type="similarity">
    <text evidence="1">Belongs to the universal ribosomal protein uS17 family.</text>
</comment>